<feature type="chain" id="PRO_0000289008" description="Tubulin polymerization-promoting protein family member 3">
    <location>
        <begin position="1"/>
        <end position="176"/>
    </location>
</feature>
<feature type="region of interest" description="Disordered" evidence="2">
    <location>
        <begin position="126"/>
        <end position="152"/>
    </location>
</feature>
<feature type="compositionally biased region" description="Basic and acidic residues" evidence="2">
    <location>
        <begin position="134"/>
        <end position="152"/>
    </location>
</feature>
<proteinExistence type="evidence at transcript level"/>
<name>TPPP3_XENTR</name>
<keyword id="KW-0963">Cytoplasm</keyword>
<keyword id="KW-0206">Cytoskeleton</keyword>
<keyword id="KW-0493">Microtubule</keyword>
<keyword id="KW-1185">Reference proteome</keyword>
<protein>
    <recommendedName>
        <fullName>Tubulin polymerization-promoting protein family member 3</fullName>
    </recommendedName>
</protein>
<accession>A4IIY2</accession>
<reference key="1">
    <citation type="submission" date="2007-03" db="EMBL/GenBank/DDBJ databases">
        <authorList>
            <consortium name="NIH - Xenopus Gene Collection (XGC) project"/>
        </authorList>
    </citation>
    <scope>NUCLEOTIDE SEQUENCE [LARGE SCALE MRNA]</scope>
    <source>
        <tissue>Brain</tissue>
    </source>
</reference>
<sequence>MAENSDLTSLEESFRKFAIYGDTKATGQEMTGKNWAKLCKDCKVIDGKSVTGTDVDIVFSKVKGKSARVITCEEFKKALEELSGKRFKGKSKEEAYEAICKLVVGKEPVSAGITKPAATGAVDRLTDTSKYTGSHKERFDESGKGKGKGGRETIVENTGYVSSYKLAGTYDAKVKK</sequence>
<evidence type="ECO:0000250" key="1">
    <source>
        <dbReference type="UniProtKB" id="Q9BW30"/>
    </source>
</evidence>
<evidence type="ECO:0000256" key="2">
    <source>
        <dbReference type="SAM" id="MobiDB-lite"/>
    </source>
</evidence>
<evidence type="ECO:0000305" key="3"/>
<comment type="function">
    <text evidence="1">Regulator of microtubule dynamic that has microtubule bundling activity.</text>
</comment>
<comment type="subcellular location">
    <subcellularLocation>
        <location evidence="1">Cytoplasm</location>
    </subcellularLocation>
    <subcellularLocation>
        <location evidence="1">Cytoplasm</location>
        <location evidence="1">Cytoskeleton</location>
    </subcellularLocation>
</comment>
<comment type="similarity">
    <text evidence="3">Belongs to the TPPP family.</text>
</comment>
<organism>
    <name type="scientific">Xenopus tropicalis</name>
    <name type="common">Western clawed frog</name>
    <name type="synonym">Silurana tropicalis</name>
    <dbReference type="NCBI Taxonomy" id="8364"/>
    <lineage>
        <taxon>Eukaryota</taxon>
        <taxon>Metazoa</taxon>
        <taxon>Chordata</taxon>
        <taxon>Craniata</taxon>
        <taxon>Vertebrata</taxon>
        <taxon>Euteleostomi</taxon>
        <taxon>Amphibia</taxon>
        <taxon>Batrachia</taxon>
        <taxon>Anura</taxon>
        <taxon>Pipoidea</taxon>
        <taxon>Pipidae</taxon>
        <taxon>Xenopodinae</taxon>
        <taxon>Xenopus</taxon>
        <taxon>Silurana</taxon>
    </lineage>
</organism>
<gene>
    <name type="primary">tppp3</name>
</gene>
<dbReference type="EMBL" id="BC136199">
    <property type="protein sequence ID" value="AAI36200.1"/>
    <property type="molecule type" value="mRNA"/>
</dbReference>
<dbReference type="RefSeq" id="NP_001096466.1">
    <property type="nucleotide sequence ID" value="NM_001102996.1"/>
</dbReference>
<dbReference type="RefSeq" id="XP_012815936.1">
    <property type="nucleotide sequence ID" value="XM_012960482.3"/>
</dbReference>
<dbReference type="RefSeq" id="XP_012815938.1">
    <property type="nucleotide sequence ID" value="XM_012960484.3"/>
</dbReference>
<dbReference type="SMR" id="A4IIY2"/>
<dbReference type="FunCoup" id="A4IIY2">
    <property type="interactions" value="88"/>
</dbReference>
<dbReference type="PaxDb" id="8364-ENSXETP00000000724"/>
<dbReference type="DNASU" id="100125085"/>
<dbReference type="GeneID" id="100125085"/>
<dbReference type="KEGG" id="xtr:100125085"/>
<dbReference type="AGR" id="Xenbase:XB-GENE-955234"/>
<dbReference type="CTD" id="51673"/>
<dbReference type="Xenbase" id="XB-GENE-955234">
    <property type="gene designation" value="tppp3"/>
</dbReference>
<dbReference type="eggNOG" id="KOG4070">
    <property type="taxonomic scope" value="Eukaryota"/>
</dbReference>
<dbReference type="HOGENOM" id="CLU_091734_0_0_1"/>
<dbReference type="InParanoid" id="A4IIY2"/>
<dbReference type="OMA" id="EAFNSIC"/>
<dbReference type="OrthoDB" id="548799at2759"/>
<dbReference type="PhylomeDB" id="A4IIY2"/>
<dbReference type="TreeFam" id="TF314440"/>
<dbReference type="Proteomes" id="UP000008143">
    <property type="component" value="Chromosome 4"/>
</dbReference>
<dbReference type="Bgee" id="ENSXETG00000000345">
    <property type="expression patterns" value="Expressed in brain and 7 other cell types or tissues"/>
</dbReference>
<dbReference type="GO" id="GO:0005737">
    <property type="term" value="C:cytoplasm"/>
    <property type="evidence" value="ECO:0007669"/>
    <property type="project" value="UniProtKB-SubCell"/>
</dbReference>
<dbReference type="GO" id="GO:0005874">
    <property type="term" value="C:microtubule"/>
    <property type="evidence" value="ECO:0007669"/>
    <property type="project" value="UniProtKB-KW"/>
</dbReference>
<dbReference type="GO" id="GO:0015631">
    <property type="term" value="F:tubulin binding"/>
    <property type="evidence" value="ECO:0000250"/>
    <property type="project" value="UniProtKB"/>
</dbReference>
<dbReference type="GO" id="GO:0001578">
    <property type="term" value="P:microtubule bundle formation"/>
    <property type="evidence" value="ECO:0000250"/>
    <property type="project" value="UniProtKB"/>
</dbReference>
<dbReference type="GO" id="GO:0046785">
    <property type="term" value="P:microtubule polymerization"/>
    <property type="evidence" value="ECO:0007669"/>
    <property type="project" value="InterPro"/>
</dbReference>
<dbReference type="FunFam" id="1.10.238.10:FF:000057">
    <property type="entry name" value="Tubulin polymerization-promoting protein family member 3"/>
    <property type="match status" value="1"/>
</dbReference>
<dbReference type="Gene3D" id="1.10.238.10">
    <property type="entry name" value="EF-hand"/>
    <property type="match status" value="1"/>
</dbReference>
<dbReference type="InterPro" id="IPR011992">
    <property type="entry name" value="EF-hand-dom_pair"/>
</dbReference>
<dbReference type="InterPro" id="IPR008907">
    <property type="entry name" value="TPP/p25"/>
</dbReference>
<dbReference type="PANTHER" id="PTHR12932">
    <property type="entry name" value="P25 ALPHA-RELATED"/>
    <property type="match status" value="1"/>
</dbReference>
<dbReference type="PANTHER" id="PTHR12932:SF16">
    <property type="entry name" value="TUBULIN POLYMERIZATION-PROMOTING PROTEIN FAMILY MEMBER 3"/>
    <property type="match status" value="1"/>
</dbReference>
<dbReference type="Pfam" id="PF05517">
    <property type="entry name" value="p25-alpha"/>
    <property type="match status" value="1"/>
</dbReference>
<dbReference type="SUPFAM" id="SSF47473">
    <property type="entry name" value="EF-hand"/>
    <property type="match status" value="1"/>
</dbReference>